<accession>A4WEZ9</accession>
<protein>
    <recommendedName>
        <fullName evidence="1">Large ribosomal subunit protein bL21</fullName>
    </recommendedName>
    <alternativeName>
        <fullName evidence="2">50S ribosomal protein L21</fullName>
    </alternativeName>
</protein>
<comment type="function">
    <text evidence="1">This protein binds to 23S rRNA in the presence of protein L20.</text>
</comment>
<comment type="subunit">
    <text evidence="1">Part of the 50S ribosomal subunit. Contacts protein L20.</text>
</comment>
<comment type="similarity">
    <text evidence="1">Belongs to the bacterial ribosomal protein bL21 family.</text>
</comment>
<keyword id="KW-0687">Ribonucleoprotein</keyword>
<keyword id="KW-0689">Ribosomal protein</keyword>
<keyword id="KW-0694">RNA-binding</keyword>
<keyword id="KW-0699">rRNA-binding</keyword>
<name>RL21_ENT38</name>
<gene>
    <name evidence="1" type="primary">rplU</name>
    <name type="ordered locus">Ent638_3622</name>
</gene>
<dbReference type="EMBL" id="CP000653">
    <property type="protein sequence ID" value="ABP62279.1"/>
    <property type="molecule type" value="Genomic_DNA"/>
</dbReference>
<dbReference type="RefSeq" id="WP_015960603.1">
    <property type="nucleotide sequence ID" value="NC_009436.1"/>
</dbReference>
<dbReference type="SMR" id="A4WEZ9"/>
<dbReference type="STRING" id="399742.Ent638_3622"/>
<dbReference type="GeneID" id="93306591"/>
<dbReference type="KEGG" id="ent:Ent638_3622"/>
<dbReference type="eggNOG" id="COG0261">
    <property type="taxonomic scope" value="Bacteria"/>
</dbReference>
<dbReference type="HOGENOM" id="CLU_061463_3_3_6"/>
<dbReference type="OrthoDB" id="9813334at2"/>
<dbReference type="Proteomes" id="UP000000230">
    <property type="component" value="Chromosome"/>
</dbReference>
<dbReference type="GO" id="GO:0005737">
    <property type="term" value="C:cytoplasm"/>
    <property type="evidence" value="ECO:0007669"/>
    <property type="project" value="UniProtKB-ARBA"/>
</dbReference>
<dbReference type="GO" id="GO:1990904">
    <property type="term" value="C:ribonucleoprotein complex"/>
    <property type="evidence" value="ECO:0007669"/>
    <property type="project" value="UniProtKB-KW"/>
</dbReference>
<dbReference type="GO" id="GO:0005840">
    <property type="term" value="C:ribosome"/>
    <property type="evidence" value="ECO:0007669"/>
    <property type="project" value="UniProtKB-KW"/>
</dbReference>
<dbReference type="GO" id="GO:0019843">
    <property type="term" value="F:rRNA binding"/>
    <property type="evidence" value="ECO:0007669"/>
    <property type="project" value="UniProtKB-UniRule"/>
</dbReference>
<dbReference type="GO" id="GO:0003735">
    <property type="term" value="F:structural constituent of ribosome"/>
    <property type="evidence" value="ECO:0007669"/>
    <property type="project" value="InterPro"/>
</dbReference>
<dbReference type="GO" id="GO:0006412">
    <property type="term" value="P:translation"/>
    <property type="evidence" value="ECO:0007669"/>
    <property type="project" value="UniProtKB-UniRule"/>
</dbReference>
<dbReference type="HAMAP" id="MF_01363">
    <property type="entry name" value="Ribosomal_bL21"/>
    <property type="match status" value="1"/>
</dbReference>
<dbReference type="InterPro" id="IPR028909">
    <property type="entry name" value="bL21-like"/>
</dbReference>
<dbReference type="InterPro" id="IPR036164">
    <property type="entry name" value="bL21-like_sf"/>
</dbReference>
<dbReference type="InterPro" id="IPR001787">
    <property type="entry name" value="Ribosomal_bL21"/>
</dbReference>
<dbReference type="InterPro" id="IPR018258">
    <property type="entry name" value="Ribosomal_bL21_CS"/>
</dbReference>
<dbReference type="NCBIfam" id="TIGR00061">
    <property type="entry name" value="L21"/>
    <property type="match status" value="1"/>
</dbReference>
<dbReference type="PANTHER" id="PTHR21349">
    <property type="entry name" value="50S RIBOSOMAL PROTEIN L21"/>
    <property type="match status" value="1"/>
</dbReference>
<dbReference type="PANTHER" id="PTHR21349:SF0">
    <property type="entry name" value="LARGE RIBOSOMAL SUBUNIT PROTEIN BL21M"/>
    <property type="match status" value="1"/>
</dbReference>
<dbReference type="Pfam" id="PF00829">
    <property type="entry name" value="Ribosomal_L21p"/>
    <property type="match status" value="1"/>
</dbReference>
<dbReference type="SUPFAM" id="SSF141091">
    <property type="entry name" value="L21p-like"/>
    <property type="match status" value="1"/>
</dbReference>
<dbReference type="PROSITE" id="PS01169">
    <property type="entry name" value="RIBOSOMAL_L21"/>
    <property type="match status" value="1"/>
</dbReference>
<proteinExistence type="inferred from homology"/>
<evidence type="ECO:0000255" key="1">
    <source>
        <dbReference type="HAMAP-Rule" id="MF_01363"/>
    </source>
</evidence>
<evidence type="ECO:0000305" key="2"/>
<feature type="chain" id="PRO_1000067833" description="Large ribosomal subunit protein bL21">
    <location>
        <begin position="1"/>
        <end position="103"/>
    </location>
</feature>
<organism>
    <name type="scientific">Enterobacter sp. (strain 638)</name>
    <dbReference type="NCBI Taxonomy" id="399742"/>
    <lineage>
        <taxon>Bacteria</taxon>
        <taxon>Pseudomonadati</taxon>
        <taxon>Pseudomonadota</taxon>
        <taxon>Gammaproteobacteria</taxon>
        <taxon>Enterobacterales</taxon>
        <taxon>Enterobacteriaceae</taxon>
        <taxon>Enterobacter</taxon>
    </lineage>
</organism>
<sequence length="103" mass="11534">MYAVFQSGGKQHRVSEGQTVRLEKLDIATGEAVEFAEVLMIANGEEVKIGVPFVDGGVIKAEVVAHGRGEKVKIVKFRRRKHYRKQQGHRQWFTDVKITGISA</sequence>
<reference key="1">
    <citation type="journal article" date="2010" name="PLoS Genet.">
        <title>Genome sequence of the plant growth promoting endophytic bacterium Enterobacter sp. 638.</title>
        <authorList>
            <person name="Taghavi S."/>
            <person name="van der Lelie D."/>
            <person name="Hoffman A."/>
            <person name="Zhang Y.B."/>
            <person name="Walla M.D."/>
            <person name="Vangronsveld J."/>
            <person name="Newman L."/>
            <person name="Monchy S."/>
        </authorList>
    </citation>
    <scope>NUCLEOTIDE SEQUENCE [LARGE SCALE GENOMIC DNA]</scope>
    <source>
        <strain>638</strain>
    </source>
</reference>